<accession>Q96IK0</accession>
<accession>B2R9N6</accession>
<organism>
    <name type="scientific">Homo sapiens</name>
    <name type="common">Human</name>
    <dbReference type="NCBI Taxonomy" id="9606"/>
    <lineage>
        <taxon>Eukaryota</taxon>
        <taxon>Metazoa</taxon>
        <taxon>Chordata</taxon>
        <taxon>Craniata</taxon>
        <taxon>Vertebrata</taxon>
        <taxon>Euteleostomi</taxon>
        <taxon>Mammalia</taxon>
        <taxon>Eutheria</taxon>
        <taxon>Euarchontoglires</taxon>
        <taxon>Primates</taxon>
        <taxon>Haplorrhini</taxon>
        <taxon>Catarrhini</taxon>
        <taxon>Hominidae</taxon>
        <taxon>Homo</taxon>
    </lineage>
</organism>
<reference key="1">
    <citation type="journal article" date="2003" name="Oncogene">
        <title>Large-scale identification and characterization of human genes that activate NF-kappaB and MAPK signaling pathways.</title>
        <authorList>
            <person name="Matsuda A."/>
            <person name="Suzuki Y."/>
            <person name="Honda G."/>
            <person name="Muramatsu S."/>
            <person name="Matsuzaki O."/>
            <person name="Nagano Y."/>
            <person name="Doi T."/>
            <person name="Shimotohno K."/>
            <person name="Harada T."/>
            <person name="Nishida E."/>
            <person name="Hayashi H."/>
            <person name="Sugano S."/>
        </authorList>
    </citation>
    <scope>NUCLEOTIDE SEQUENCE [LARGE SCALE MRNA]</scope>
    <scope>FUNCTION</scope>
    <source>
        <tissue>Lung</tissue>
    </source>
</reference>
<reference key="2">
    <citation type="journal article" date="2004" name="Nat. Genet.">
        <title>Complete sequencing and characterization of 21,243 full-length human cDNAs.</title>
        <authorList>
            <person name="Ota T."/>
            <person name="Suzuki Y."/>
            <person name="Nishikawa T."/>
            <person name="Otsuki T."/>
            <person name="Sugiyama T."/>
            <person name="Irie R."/>
            <person name="Wakamatsu A."/>
            <person name="Hayashi K."/>
            <person name="Sato H."/>
            <person name="Nagai K."/>
            <person name="Kimura K."/>
            <person name="Makita H."/>
            <person name="Sekine M."/>
            <person name="Obayashi M."/>
            <person name="Nishi T."/>
            <person name="Shibahara T."/>
            <person name="Tanaka T."/>
            <person name="Ishii S."/>
            <person name="Yamamoto J."/>
            <person name="Saito K."/>
            <person name="Kawai Y."/>
            <person name="Isono Y."/>
            <person name="Nakamura Y."/>
            <person name="Nagahari K."/>
            <person name="Murakami K."/>
            <person name="Yasuda T."/>
            <person name="Iwayanagi T."/>
            <person name="Wagatsuma M."/>
            <person name="Shiratori A."/>
            <person name="Sudo H."/>
            <person name="Hosoiri T."/>
            <person name="Kaku Y."/>
            <person name="Kodaira H."/>
            <person name="Kondo H."/>
            <person name="Sugawara M."/>
            <person name="Takahashi M."/>
            <person name="Kanda K."/>
            <person name="Yokoi T."/>
            <person name="Furuya T."/>
            <person name="Kikkawa E."/>
            <person name="Omura Y."/>
            <person name="Abe K."/>
            <person name="Kamihara K."/>
            <person name="Katsuta N."/>
            <person name="Sato K."/>
            <person name="Tanikawa M."/>
            <person name="Yamazaki M."/>
            <person name="Ninomiya K."/>
            <person name="Ishibashi T."/>
            <person name="Yamashita H."/>
            <person name="Murakawa K."/>
            <person name="Fujimori K."/>
            <person name="Tanai H."/>
            <person name="Kimata M."/>
            <person name="Watanabe M."/>
            <person name="Hiraoka S."/>
            <person name="Chiba Y."/>
            <person name="Ishida S."/>
            <person name="Ono Y."/>
            <person name="Takiguchi S."/>
            <person name="Watanabe S."/>
            <person name="Yosida M."/>
            <person name="Hotuta T."/>
            <person name="Kusano J."/>
            <person name="Kanehori K."/>
            <person name="Takahashi-Fujii A."/>
            <person name="Hara H."/>
            <person name="Tanase T.-O."/>
            <person name="Nomura Y."/>
            <person name="Togiya S."/>
            <person name="Komai F."/>
            <person name="Hara R."/>
            <person name="Takeuchi K."/>
            <person name="Arita M."/>
            <person name="Imose N."/>
            <person name="Musashino K."/>
            <person name="Yuuki H."/>
            <person name="Oshima A."/>
            <person name="Sasaki N."/>
            <person name="Aotsuka S."/>
            <person name="Yoshikawa Y."/>
            <person name="Matsunawa H."/>
            <person name="Ichihara T."/>
            <person name="Shiohata N."/>
            <person name="Sano S."/>
            <person name="Moriya S."/>
            <person name="Momiyama H."/>
            <person name="Satoh N."/>
            <person name="Takami S."/>
            <person name="Terashima Y."/>
            <person name="Suzuki O."/>
            <person name="Nakagawa S."/>
            <person name="Senoh A."/>
            <person name="Mizoguchi H."/>
            <person name="Goto Y."/>
            <person name="Shimizu F."/>
            <person name="Wakebe H."/>
            <person name="Hishigaki H."/>
            <person name="Watanabe T."/>
            <person name="Sugiyama A."/>
            <person name="Takemoto M."/>
            <person name="Kawakami B."/>
            <person name="Yamazaki M."/>
            <person name="Watanabe K."/>
            <person name="Kumagai A."/>
            <person name="Itakura S."/>
            <person name="Fukuzumi Y."/>
            <person name="Fujimori Y."/>
            <person name="Komiyama M."/>
            <person name="Tashiro H."/>
            <person name="Tanigami A."/>
            <person name="Fujiwara T."/>
            <person name="Ono T."/>
            <person name="Yamada K."/>
            <person name="Fujii Y."/>
            <person name="Ozaki K."/>
            <person name="Hirao M."/>
            <person name="Ohmori Y."/>
            <person name="Kawabata A."/>
            <person name="Hikiji T."/>
            <person name="Kobatake N."/>
            <person name="Inagaki H."/>
            <person name="Ikema Y."/>
            <person name="Okamoto S."/>
            <person name="Okitani R."/>
            <person name="Kawakami T."/>
            <person name="Noguchi S."/>
            <person name="Itoh T."/>
            <person name="Shigeta K."/>
            <person name="Senba T."/>
            <person name="Matsumura K."/>
            <person name="Nakajima Y."/>
            <person name="Mizuno T."/>
            <person name="Morinaga M."/>
            <person name="Sasaki M."/>
            <person name="Togashi T."/>
            <person name="Oyama M."/>
            <person name="Hata H."/>
            <person name="Watanabe M."/>
            <person name="Komatsu T."/>
            <person name="Mizushima-Sugano J."/>
            <person name="Satoh T."/>
            <person name="Shirai Y."/>
            <person name="Takahashi Y."/>
            <person name="Nakagawa K."/>
            <person name="Okumura K."/>
            <person name="Nagase T."/>
            <person name="Nomura N."/>
            <person name="Kikuchi H."/>
            <person name="Masuho Y."/>
            <person name="Yamashita R."/>
            <person name="Nakai K."/>
            <person name="Yada T."/>
            <person name="Nakamura Y."/>
            <person name="Ohara O."/>
            <person name="Isogai T."/>
            <person name="Sugano S."/>
        </authorList>
    </citation>
    <scope>NUCLEOTIDE SEQUENCE [LARGE SCALE MRNA]</scope>
    <source>
        <tissue>Skeletal muscle</tissue>
    </source>
</reference>
<reference key="3">
    <citation type="submission" date="2005-09" db="EMBL/GenBank/DDBJ databases">
        <authorList>
            <person name="Mural R.J."/>
            <person name="Istrail S."/>
            <person name="Sutton G.G."/>
            <person name="Florea L."/>
            <person name="Halpern A.L."/>
            <person name="Mobarry C.M."/>
            <person name="Lippert R."/>
            <person name="Walenz B."/>
            <person name="Shatkay H."/>
            <person name="Dew I."/>
            <person name="Miller J.R."/>
            <person name="Flanigan M.J."/>
            <person name="Edwards N.J."/>
            <person name="Bolanos R."/>
            <person name="Fasulo D."/>
            <person name="Halldorsson B.V."/>
            <person name="Hannenhalli S."/>
            <person name="Turner R."/>
            <person name="Yooseph S."/>
            <person name="Lu F."/>
            <person name="Nusskern D.R."/>
            <person name="Shue B.C."/>
            <person name="Zheng X.H."/>
            <person name="Zhong F."/>
            <person name="Delcher A.L."/>
            <person name="Huson D.H."/>
            <person name="Kravitz S.A."/>
            <person name="Mouchard L."/>
            <person name="Reinert K."/>
            <person name="Remington K.A."/>
            <person name="Clark A.G."/>
            <person name="Waterman M.S."/>
            <person name="Eichler E.E."/>
            <person name="Adams M.D."/>
            <person name="Hunkapiller M.W."/>
            <person name="Myers E.W."/>
            <person name="Venter J.C."/>
        </authorList>
    </citation>
    <scope>NUCLEOTIDE SEQUENCE [LARGE SCALE GENOMIC DNA]</scope>
</reference>
<reference key="4">
    <citation type="journal article" date="2004" name="Genome Res.">
        <title>The status, quality, and expansion of the NIH full-length cDNA project: the Mammalian Gene Collection (MGC).</title>
        <authorList>
            <consortium name="The MGC Project Team"/>
        </authorList>
    </citation>
    <scope>NUCLEOTIDE SEQUENCE [LARGE SCALE MRNA]</scope>
    <source>
        <tissue>Muscle</tissue>
    </source>
</reference>
<reference key="5">
    <citation type="journal article" date="2012" name="Proc. Natl. Acad. Sci. U.S.A.">
        <title>N-terminal acetylome analyses and functional insights of the N-terminal acetyltransferase NatB.</title>
        <authorList>
            <person name="Van Damme P."/>
            <person name="Lasa M."/>
            <person name="Polevoda B."/>
            <person name="Gazquez C."/>
            <person name="Elosegui-Artola A."/>
            <person name="Kim D.S."/>
            <person name="De Juan-Pardo E."/>
            <person name="Demeyer K."/>
            <person name="Hole K."/>
            <person name="Larrea E."/>
            <person name="Timmerman E."/>
            <person name="Prieto J."/>
            <person name="Arnesen T."/>
            <person name="Sherman F."/>
            <person name="Gevaert K."/>
            <person name="Aldabe R."/>
        </authorList>
    </citation>
    <scope>IDENTIFICATION BY MASS SPECTROMETRY [LARGE SCALE ANALYSIS]</scope>
</reference>
<comment type="function">
    <text evidence="2">May activate NF-kappa-B signaling pathways.</text>
</comment>
<comment type="interaction">
    <interactant intactId="EBI-3922699">
        <id>Q96IK0</id>
    </interactant>
    <interactant intactId="EBI-749464">
        <id>Q12983</id>
        <label>BNIP3</label>
    </interactant>
    <organismsDiffer>false</organismsDiffer>
    <experiments>3</experiments>
</comment>
<comment type="interaction">
    <interactant intactId="EBI-3922699">
        <id>Q96IK0</id>
    </interactant>
    <interactant intactId="EBI-12003442">
        <id>Q8WVX3-2</id>
        <label>C4orf3</label>
    </interactant>
    <organismsDiffer>false</organismsDiffer>
    <experiments>3</experiments>
</comment>
<comment type="interaction">
    <interactant intactId="EBI-3922699">
        <id>Q96IK0</id>
    </interactant>
    <interactant intactId="EBI-11991950">
        <id>Q8WWP7</id>
        <label>GIMAP1</label>
    </interactant>
    <organismsDiffer>false</organismsDiffer>
    <experiments>3</experiments>
</comment>
<comment type="interaction">
    <interactant intactId="EBI-3922699">
        <id>Q96IK0</id>
    </interactant>
    <interactant intactId="EBI-1246131">
        <id>O95167</id>
        <label>NDUFA3</label>
    </interactant>
    <organismsDiffer>false</organismsDiffer>
    <experiments>3</experiments>
</comment>
<comment type="interaction">
    <interactant intactId="EBI-3922699">
        <id>Q96IK0</id>
    </interactant>
    <interactant intactId="EBI-10317425">
        <id>Q9NZG7</id>
        <label>NINJ2</label>
    </interactant>
    <organismsDiffer>false</organismsDiffer>
    <experiments>3</experiments>
</comment>
<comment type="interaction">
    <interactant intactId="EBI-3922699">
        <id>Q96IK0</id>
    </interactant>
    <interactant intactId="EBI-716063">
        <id>Q13113</id>
        <label>PDZK1IP1</label>
    </interactant>
    <organismsDiffer>false</organismsDiffer>
    <experiments>3</experiments>
</comment>
<comment type="interaction">
    <interactant intactId="EBI-3922699">
        <id>Q96IK0</id>
    </interactant>
    <interactant intactId="EBI-12257782">
        <id>Q99640-2</id>
        <label>PKMYT1</label>
    </interactant>
    <organismsDiffer>false</organismsDiffer>
    <experiments>3</experiments>
</comment>
<comment type="interaction">
    <interactant intactId="EBI-3922699">
        <id>Q96IK0</id>
    </interactant>
    <interactant intactId="EBI-12200293">
        <id>P0DN84</id>
        <label>STRIT1</label>
    </interactant>
    <organismsDiffer>false</organismsDiffer>
    <experiments>3</experiments>
</comment>
<comment type="interaction">
    <interactant intactId="EBI-3922699">
        <id>Q96IK0</id>
    </interactant>
    <interactant intactId="EBI-12094584">
        <id>O60499-2</id>
        <label>STX10</label>
    </interactant>
    <organismsDiffer>false</organismsDiffer>
    <experiments>3</experiments>
</comment>
<comment type="interaction">
    <interactant intactId="EBI-3922699">
        <id>Q96IK0</id>
    </interactant>
    <interactant intactId="EBI-1049004">
        <id>P57105</id>
        <label>SYNJ2BP</label>
    </interactant>
    <organismsDiffer>false</organismsDiffer>
    <experiments>3</experiments>
</comment>
<comment type="interaction">
    <interactant intactId="EBI-3922699">
        <id>Q96IK0</id>
    </interactant>
    <interactant intactId="EBI-12887458">
        <id>Q9BU79</id>
        <label>TMEM243</label>
    </interactant>
    <organismsDiffer>false</organismsDiffer>
    <experiments>3</experiments>
</comment>
<comment type="interaction">
    <interactant intactId="EBI-3922699">
        <id>Q96IK0</id>
    </interactant>
    <interactant intactId="EBI-6656213">
        <id>Q6PI78</id>
        <label>TMEM65</label>
    </interactant>
    <organismsDiffer>false</organismsDiffer>
    <experiments>3</experiments>
</comment>
<comment type="interaction">
    <interactant intactId="EBI-3922699">
        <id>Q96IK0</id>
    </interactant>
    <interactant intactId="EBI-12097582">
        <id>P23763-3</id>
        <label>VAMP1</label>
    </interactant>
    <organismsDiffer>false</organismsDiffer>
    <experiments>3</experiments>
</comment>
<comment type="interaction">
    <interactant intactId="EBI-3922699">
        <id>Q96IK0</id>
    </interactant>
    <interactant intactId="EBI-520113">
        <id>P63027</id>
        <label>VAMP2</label>
    </interactant>
    <organismsDiffer>false</organismsDiffer>
    <experiments>3</experiments>
</comment>
<comment type="interaction">
    <interactant intactId="EBI-3922699">
        <id>Q96IK0</id>
    </interactant>
    <interactant intactId="EBI-1188298">
        <id>O95292</id>
        <label>VAPB</label>
    </interactant>
    <organismsDiffer>false</organismsDiffer>
    <experiments>3</experiments>
</comment>
<comment type="subcellular location">
    <subcellularLocation>
        <location evidence="3">Membrane</location>
        <topology evidence="3">Multi-pass membrane protein</topology>
    </subcellularLocation>
</comment>
<evidence type="ECO:0000255" key="1"/>
<evidence type="ECO:0000269" key="2">
    <source>
    </source>
</evidence>
<evidence type="ECO:0000305" key="3"/>
<name>TM101_HUMAN</name>
<protein>
    <recommendedName>
        <fullName>Transmembrane protein 101</fullName>
    </recommendedName>
    <alternativeName>
        <fullName>Putative NF-kappa-B-activating protein 130</fullName>
    </alternativeName>
</protein>
<feature type="chain" id="PRO_0000240864" description="Transmembrane protein 101">
    <location>
        <begin position="1"/>
        <end position="257"/>
    </location>
</feature>
<feature type="transmembrane region" description="Helical" evidence="1">
    <location>
        <begin position="21"/>
        <end position="40"/>
    </location>
</feature>
<feature type="transmembrane region" description="Helical" evidence="1">
    <location>
        <begin position="52"/>
        <end position="72"/>
    </location>
</feature>
<feature type="transmembrane region" description="Helical" evidence="1">
    <location>
        <begin position="77"/>
        <end position="97"/>
    </location>
</feature>
<feature type="transmembrane region" description="Helical" evidence="1">
    <location>
        <begin position="110"/>
        <end position="130"/>
    </location>
</feature>
<feature type="transmembrane region" description="Helical" evidence="1">
    <location>
        <begin position="139"/>
        <end position="159"/>
    </location>
</feature>
<feature type="transmembrane region" description="Helical" evidence="1">
    <location>
        <begin position="182"/>
        <end position="202"/>
    </location>
</feature>
<feature type="transmembrane region" description="Helical" evidence="1">
    <location>
        <begin position="206"/>
        <end position="226"/>
    </location>
</feature>
<feature type="transmembrane region" description="Helical" evidence="1">
    <location>
        <begin position="233"/>
        <end position="253"/>
    </location>
</feature>
<sequence>MASKIGSRRWMLQLIMQLGSVLLTRCPFWGCFSQLMLYAERAEARRKPDIPVPYLYFDMGAAVLCASFMSFGVKRRWFALGAALQLAISTYAAYIGGYVHYGDWLKVRMYSRTVAIIGGFLVLASGAGELYRRKPRSRSLQSTGQVFLGIYLICVAYSLQHSKEDRLAYLNHLPGGELMIQLFFVLYGILALAFLSGYYVTLAAQILAVLLPPVMLLIDGNVAYWHNTRRVEFWNQMKLLGESVGIFGTAVILATDG</sequence>
<gene>
    <name type="primary">TMEM101</name>
</gene>
<dbReference type="EMBL" id="AB097008">
    <property type="protein sequence ID" value="BAC77361.1"/>
    <property type="molecule type" value="mRNA"/>
</dbReference>
<dbReference type="EMBL" id="AK313855">
    <property type="protein sequence ID" value="BAG36583.1"/>
    <property type="molecule type" value="mRNA"/>
</dbReference>
<dbReference type="EMBL" id="CH471178">
    <property type="protein sequence ID" value="EAW51642.1"/>
    <property type="molecule type" value="Genomic_DNA"/>
</dbReference>
<dbReference type="EMBL" id="BC007438">
    <property type="protein sequence ID" value="AAH07438.1"/>
    <property type="molecule type" value="mRNA"/>
</dbReference>
<dbReference type="CCDS" id="CCDS11474.1"/>
<dbReference type="RefSeq" id="NP_001291742.1">
    <property type="nucleotide sequence ID" value="NM_001304813.1"/>
</dbReference>
<dbReference type="RefSeq" id="NP_001291743.1">
    <property type="nucleotide sequence ID" value="NM_001304814.1"/>
</dbReference>
<dbReference type="RefSeq" id="NP_115752.1">
    <property type="nucleotide sequence ID" value="NM_032376.4"/>
</dbReference>
<dbReference type="RefSeq" id="XP_005257794.1">
    <property type="nucleotide sequence ID" value="XM_005257737.2"/>
</dbReference>
<dbReference type="RefSeq" id="XP_011523648.1">
    <property type="nucleotide sequence ID" value="XM_011525346.1"/>
</dbReference>
<dbReference type="RefSeq" id="XP_011523649.1">
    <property type="nucleotide sequence ID" value="XM_011525347.1"/>
</dbReference>
<dbReference type="RefSeq" id="XP_011523651.1">
    <property type="nucleotide sequence ID" value="XM_011525349.1"/>
</dbReference>
<dbReference type="RefSeq" id="XP_011523653.1">
    <property type="nucleotide sequence ID" value="XM_011525351.1"/>
</dbReference>
<dbReference type="BioGRID" id="124060">
    <property type="interactions" value="30"/>
</dbReference>
<dbReference type="FunCoup" id="Q96IK0">
    <property type="interactions" value="136"/>
</dbReference>
<dbReference type="IntAct" id="Q96IK0">
    <property type="interactions" value="26"/>
</dbReference>
<dbReference type="MINT" id="Q96IK0"/>
<dbReference type="STRING" id="9606.ENSP00000468025"/>
<dbReference type="TCDB" id="9.B.365.3.1">
    <property type="family name" value="the putative 4 - 5 tms doxd (doxd) superfamily"/>
</dbReference>
<dbReference type="SwissPalm" id="Q96IK0"/>
<dbReference type="BioMuta" id="TMEM101"/>
<dbReference type="DMDM" id="74732068"/>
<dbReference type="jPOST" id="Q96IK0"/>
<dbReference type="MassIVE" id="Q96IK0"/>
<dbReference type="PaxDb" id="9606-ENSP00000468025"/>
<dbReference type="PeptideAtlas" id="Q96IK0"/>
<dbReference type="ProteomicsDB" id="76835"/>
<dbReference type="Pumba" id="Q96IK0"/>
<dbReference type="Antibodypedia" id="54322">
    <property type="antibodies" value="67 antibodies from 20 providers"/>
</dbReference>
<dbReference type="DNASU" id="84336"/>
<dbReference type="Ensembl" id="ENST00000206380.8">
    <property type="protein sequence ID" value="ENSP00000206380.3"/>
    <property type="gene ID" value="ENSG00000091947.10"/>
</dbReference>
<dbReference type="Ensembl" id="ENST00000589334.5">
    <property type="protein sequence ID" value="ENSP00000468025.1"/>
    <property type="gene ID" value="ENSG00000091947.10"/>
</dbReference>
<dbReference type="GeneID" id="84336"/>
<dbReference type="KEGG" id="hsa:84336"/>
<dbReference type="MANE-Select" id="ENST00000206380.8">
    <property type="protein sequence ID" value="ENSP00000206380.3"/>
    <property type="RefSeq nucleotide sequence ID" value="NM_032376.4"/>
    <property type="RefSeq protein sequence ID" value="NP_115752.1"/>
</dbReference>
<dbReference type="UCSC" id="uc002ieu.4">
    <property type="organism name" value="human"/>
</dbReference>
<dbReference type="AGR" id="HGNC:28653"/>
<dbReference type="CTD" id="84336"/>
<dbReference type="DisGeNET" id="84336"/>
<dbReference type="GeneCards" id="TMEM101"/>
<dbReference type="HGNC" id="HGNC:28653">
    <property type="gene designation" value="TMEM101"/>
</dbReference>
<dbReference type="HPA" id="ENSG00000091947">
    <property type="expression patterns" value="Low tissue specificity"/>
</dbReference>
<dbReference type="neXtProt" id="NX_Q96IK0"/>
<dbReference type="OpenTargets" id="ENSG00000091947"/>
<dbReference type="PharmGKB" id="PA142670750"/>
<dbReference type="VEuPathDB" id="HostDB:ENSG00000091947"/>
<dbReference type="eggNOG" id="ENOG502QRKU">
    <property type="taxonomic scope" value="Eukaryota"/>
</dbReference>
<dbReference type="GeneTree" id="ENSGT00390000011938"/>
<dbReference type="HOGENOM" id="CLU_094617_0_0_1"/>
<dbReference type="InParanoid" id="Q96IK0"/>
<dbReference type="OMA" id="HVEFWNQ"/>
<dbReference type="OrthoDB" id="6082754at2759"/>
<dbReference type="PAN-GO" id="Q96IK0">
    <property type="GO annotations" value="0 GO annotations based on evolutionary models"/>
</dbReference>
<dbReference type="PhylomeDB" id="Q96IK0"/>
<dbReference type="PathwayCommons" id="Q96IK0"/>
<dbReference type="SignaLink" id="Q96IK0"/>
<dbReference type="BioGRID-ORCS" id="84336">
    <property type="hits" value="9 hits in 1161 CRISPR screens"/>
</dbReference>
<dbReference type="ChiTaRS" id="TMEM101">
    <property type="organism name" value="human"/>
</dbReference>
<dbReference type="GenomeRNAi" id="84336"/>
<dbReference type="Pharos" id="Q96IK0">
    <property type="development level" value="Tdark"/>
</dbReference>
<dbReference type="PRO" id="PR:Q96IK0"/>
<dbReference type="Proteomes" id="UP000005640">
    <property type="component" value="Chromosome 17"/>
</dbReference>
<dbReference type="RNAct" id="Q96IK0">
    <property type="molecule type" value="protein"/>
</dbReference>
<dbReference type="Bgee" id="ENSG00000091947">
    <property type="expression patterns" value="Expressed in metanephros cortex and 154 other cell types or tissues"/>
</dbReference>
<dbReference type="ExpressionAtlas" id="Q96IK0">
    <property type="expression patterns" value="baseline and differential"/>
</dbReference>
<dbReference type="GO" id="GO:0016020">
    <property type="term" value="C:membrane"/>
    <property type="evidence" value="ECO:0007669"/>
    <property type="project" value="UniProtKB-SubCell"/>
</dbReference>
<dbReference type="GO" id="GO:0043123">
    <property type="term" value="P:positive regulation of canonical NF-kappaB signal transduction"/>
    <property type="evidence" value="ECO:0007001"/>
    <property type="project" value="UniProtKB"/>
</dbReference>
<dbReference type="InterPro" id="IPR029371">
    <property type="entry name" value="TMEM101"/>
</dbReference>
<dbReference type="PANTHER" id="PTHR31034">
    <property type="entry name" value="TRANSMEMBRANE PROTEIN 101"/>
    <property type="match status" value="1"/>
</dbReference>
<dbReference type="PANTHER" id="PTHR31034:SF2">
    <property type="entry name" value="TRANSMEMBRANE PROTEIN 101"/>
    <property type="match status" value="1"/>
</dbReference>
<dbReference type="Pfam" id="PF15111">
    <property type="entry name" value="TMEM101"/>
    <property type="match status" value="1"/>
</dbReference>
<keyword id="KW-0472">Membrane</keyword>
<keyword id="KW-1267">Proteomics identification</keyword>
<keyword id="KW-1185">Reference proteome</keyword>
<keyword id="KW-0812">Transmembrane</keyword>
<keyword id="KW-1133">Transmembrane helix</keyword>
<proteinExistence type="evidence at protein level"/>